<dbReference type="EC" id="3.5.4.13" evidence="1"/>
<dbReference type="EMBL" id="CP000116">
    <property type="protein sequence ID" value="AAZ98060.1"/>
    <property type="molecule type" value="Genomic_DNA"/>
</dbReference>
<dbReference type="RefSeq" id="WP_011312619.1">
    <property type="nucleotide sequence ID" value="NC_007404.1"/>
</dbReference>
<dbReference type="SMR" id="Q3SH29"/>
<dbReference type="STRING" id="292415.Tbd_2107"/>
<dbReference type="KEGG" id="tbd:Tbd_2107"/>
<dbReference type="eggNOG" id="COG0717">
    <property type="taxonomic scope" value="Bacteria"/>
</dbReference>
<dbReference type="HOGENOM" id="CLU_087476_4_0_4"/>
<dbReference type="OrthoDB" id="9780956at2"/>
<dbReference type="UniPathway" id="UPA00610">
    <property type="reaction ID" value="UER00665"/>
</dbReference>
<dbReference type="Proteomes" id="UP000008291">
    <property type="component" value="Chromosome"/>
</dbReference>
<dbReference type="GO" id="GO:0008829">
    <property type="term" value="F:dCTP deaminase activity"/>
    <property type="evidence" value="ECO:0007669"/>
    <property type="project" value="UniProtKB-UniRule"/>
</dbReference>
<dbReference type="GO" id="GO:0000166">
    <property type="term" value="F:nucleotide binding"/>
    <property type="evidence" value="ECO:0007669"/>
    <property type="project" value="UniProtKB-KW"/>
</dbReference>
<dbReference type="GO" id="GO:0006226">
    <property type="term" value="P:dUMP biosynthetic process"/>
    <property type="evidence" value="ECO:0007669"/>
    <property type="project" value="UniProtKB-UniPathway"/>
</dbReference>
<dbReference type="GO" id="GO:0006229">
    <property type="term" value="P:dUTP biosynthetic process"/>
    <property type="evidence" value="ECO:0007669"/>
    <property type="project" value="UniProtKB-UniRule"/>
</dbReference>
<dbReference type="GO" id="GO:0015949">
    <property type="term" value="P:nucleobase-containing small molecule interconversion"/>
    <property type="evidence" value="ECO:0007669"/>
    <property type="project" value="TreeGrafter"/>
</dbReference>
<dbReference type="CDD" id="cd07557">
    <property type="entry name" value="trimeric_dUTPase"/>
    <property type="match status" value="1"/>
</dbReference>
<dbReference type="FunFam" id="2.70.40.10:FF:000001">
    <property type="entry name" value="dCTP deaminase"/>
    <property type="match status" value="1"/>
</dbReference>
<dbReference type="Gene3D" id="2.70.40.10">
    <property type="match status" value="1"/>
</dbReference>
<dbReference type="HAMAP" id="MF_00146">
    <property type="entry name" value="dCTP_deaminase"/>
    <property type="match status" value="1"/>
</dbReference>
<dbReference type="InterPro" id="IPR011962">
    <property type="entry name" value="dCTP_deaminase"/>
</dbReference>
<dbReference type="InterPro" id="IPR036157">
    <property type="entry name" value="dUTPase-like_sf"/>
</dbReference>
<dbReference type="InterPro" id="IPR033704">
    <property type="entry name" value="dUTPase_trimeric"/>
</dbReference>
<dbReference type="NCBIfam" id="TIGR02274">
    <property type="entry name" value="dCTP_deam"/>
    <property type="match status" value="1"/>
</dbReference>
<dbReference type="PANTHER" id="PTHR42680">
    <property type="entry name" value="DCTP DEAMINASE"/>
    <property type="match status" value="1"/>
</dbReference>
<dbReference type="PANTHER" id="PTHR42680:SF3">
    <property type="entry name" value="DCTP DEAMINASE"/>
    <property type="match status" value="1"/>
</dbReference>
<dbReference type="Pfam" id="PF22769">
    <property type="entry name" value="DCD"/>
    <property type="match status" value="1"/>
</dbReference>
<dbReference type="SUPFAM" id="SSF51283">
    <property type="entry name" value="dUTPase-like"/>
    <property type="match status" value="1"/>
</dbReference>
<protein>
    <recommendedName>
        <fullName evidence="1">dCTP deaminase</fullName>
        <ecNumber evidence="1">3.5.4.13</ecNumber>
    </recommendedName>
    <alternativeName>
        <fullName evidence="1">Deoxycytidine triphosphate deaminase</fullName>
    </alternativeName>
</protein>
<accession>Q3SH29</accession>
<proteinExistence type="inferred from homology"/>
<evidence type="ECO:0000255" key="1">
    <source>
        <dbReference type="HAMAP-Rule" id="MF_00146"/>
    </source>
</evidence>
<gene>
    <name evidence="1" type="primary">dcd</name>
    <name type="ordered locus">Tbd_2107</name>
</gene>
<name>DCD_THIDA</name>
<feature type="chain" id="PRO_1000009826" description="dCTP deaminase">
    <location>
        <begin position="1"/>
        <end position="188"/>
    </location>
</feature>
<feature type="active site" description="Proton donor/acceptor" evidence="1">
    <location>
        <position position="137"/>
    </location>
</feature>
<feature type="binding site" evidence="1">
    <location>
        <begin position="111"/>
        <end position="116"/>
    </location>
    <ligand>
        <name>dCTP</name>
        <dbReference type="ChEBI" id="CHEBI:61481"/>
    </ligand>
</feature>
<feature type="binding site" evidence="1">
    <location>
        <begin position="135"/>
        <end position="137"/>
    </location>
    <ligand>
        <name>dCTP</name>
        <dbReference type="ChEBI" id="CHEBI:61481"/>
    </ligand>
</feature>
<feature type="binding site" evidence="1">
    <location>
        <position position="156"/>
    </location>
    <ligand>
        <name>dCTP</name>
        <dbReference type="ChEBI" id="CHEBI:61481"/>
    </ligand>
</feature>
<feature type="binding site" evidence="1">
    <location>
        <position position="170"/>
    </location>
    <ligand>
        <name>dCTP</name>
        <dbReference type="ChEBI" id="CHEBI:61481"/>
    </ligand>
</feature>
<feature type="binding site" evidence="1">
    <location>
        <position position="180"/>
    </location>
    <ligand>
        <name>dCTP</name>
        <dbReference type="ChEBI" id="CHEBI:61481"/>
    </ligand>
</feature>
<reference key="1">
    <citation type="journal article" date="2006" name="J. Bacteriol.">
        <title>The genome sequence of the obligately chemolithoautotrophic, facultatively anaerobic bacterium Thiobacillus denitrificans.</title>
        <authorList>
            <person name="Beller H.R."/>
            <person name="Chain P.S."/>
            <person name="Letain T.E."/>
            <person name="Chakicherla A."/>
            <person name="Larimer F.W."/>
            <person name="Richardson P.M."/>
            <person name="Coleman M.A."/>
            <person name="Wood A.P."/>
            <person name="Kelly D.P."/>
        </authorList>
    </citation>
    <scope>NUCLEOTIDE SEQUENCE [LARGE SCALE GENOMIC DNA]</scope>
    <source>
        <strain>ATCC 25259 / T1</strain>
    </source>
</reference>
<comment type="function">
    <text evidence="1">Catalyzes the deamination of dCTP to dUTP.</text>
</comment>
<comment type="catalytic activity">
    <reaction evidence="1">
        <text>dCTP + H2O + H(+) = dUTP + NH4(+)</text>
        <dbReference type="Rhea" id="RHEA:22680"/>
        <dbReference type="ChEBI" id="CHEBI:15377"/>
        <dbReference type="ChEBI" id="CHEBI:15378"/>
        <dbReference type="ChEBI" id="CHEBI:28938"/>
        <dbReference type="ChEBI" id="CHEBI:61481"/>
        <dbReference type="ChEBI" id="CHEBI:61555"/>
        <dbReference type="EC" id="3.5.4.13"/>
    </reaction>
</comment>
<comment type="pathway">
    <text evidence="1">Pyrimidine metabolism; dUMP biosynthesis; dUMP from dCTP (dUTP route): step 1/2.</text>
</comment>
<comment type="subunit">
    <text evidence="1">Homotrimer.</text>
</comment>
<comment type="similarity">
    <text evidence="1">Belongs to the dCTP deaminase family.</text>
</comment>
<organism>
    <name type="scientific">Thiobacillus denitrificans (strain ATCC 25259 / T1)</name>
    <dbReference type="NCBI Taxonomy" id="292415"/>
    <lineage>
        <taxon>Bacteria</taxon>
        <taxon>Pseudomonadati</taxon>
        <taxon>Pseudomonadota</taxon>
        <taxon>Betaproteobacteria</taxon>
        <taxon>Nitrosomonadales</taxon>
        <taxon>Thiobacillaceae</taxon>
        <taxon>Thiobacillus</taxon>
    </lineage>
</organism>
<sequence>MSIKSDRWIRRMAAEHGMIEPFEAGQIKQAAGRSIVSYGTSSYGYDVRCASEFKLFTDINTTIVDPKAFDPNSFVEVKGDSCIIPPNSFALARTVEYFRIPRSVLTICLGKSTYARCGIIVNVTPLEPEWEGHVTLEFSNTTPLPARIYANEGVAQMLFLESDEVCETSYRDRGGKYQGQVGVTLPKI</sequence>
<keyword id="KW-0378">Hydrolase</keyword>
<keyword id="KW-0546">Nucleotide metabolism</keyword>
<keyword id="KW-0547">Nucleotide-binding</keyword>
<keyword id="KW-1185">Reference proteome</keyword>